<dbReference type="EMBL" id="CP000270">
    <property type="protein sequence ID" value="ABE32607.1"/>
    <property type="molecule type" value="Genomic_DNA"/>
</dbReference>
<dbReference type="RefSeq" id="WP_006052214.1">
    <property type="nucleotide sequence ID" value="NZ_CP008760.1"/>
</dbReference>
<dbReference type="SMR" id="Q13TI2"/>
<dbReference type="STRING" id="266265.Bxe_A0326"/>
<dbReference type="GeneID" id="97311004"/>
<dbReference type="KEGG" id="bxb:DR64_2496"/>
<dbReference type="KEGG" id="bxe:Bxe_A0326"/>
<dbReference type="eggNOG" id="COG0094">
    <property type="taxonomic scope" value="Bacteria"/>
</dbReference>
<dbReference type="OrthoDB" id="9806626at2"/>
<dbReference type="Proteomes" id="UP000001817">
    <property type="component" value="Chromosome 1"/>
</dbReference>
<dbReference type="GO" id="GO:1990904">
    <property type="term" value="C:ribonucleoprotein complex"/>
    <property type="evidence" value="ECO:0007669"/>
    <property type="project" value="UniProtKB-KW"/>
</dbReference>
<dbReference type="GO" id="GO:0005840">
    <property type="term" value="C:ribosome"/>
    <property type="evidence" value="ECO:0007669"/>
    <property type="project" value="UniProtKB-KW"/>
</dbReference>
<dbReference type="GO" id="GO:0019843">
    <property type="term" value="F:rRNA binding"/>
    <property type="evidence" value="ECO:0007669"/>
    <property type="project" value="UniProtKB-UniRule"/>
</dbReference>
<dbReference type="GO" id="GO:0003735">
    <property type="term" value="F:structural constituent of ribosome"/>
    <property type="evidence" value="ECO:0007669"/>
    <property type="project" value="InterPro"/>
</dbReference>
<dbReference type="GO" id="GO:0000049">
    <property type="term" value="F:tRNA binding"/>
    <property type="evidence" value="ECO:0007669"/>
    <property type="project" value="UniProtKB-UniRule"/>
</dbReference>
<dbReference type="GO" id="GO:0006412">
    <property type="term" value="P:translation"/>
    <property type="evidence" value="ECO:0007669"/>
    <property type="project" value="UniProtKB-UniRule"/>
</dbReference>
<dbReference type="FunFam" id="3.30.1440.10:FF:000001">
    <property type="entry name" value="50S ribosomal protein L5"/>
    <property type="match status" value="1"/>
</dbReference>
<dbReference type="Gene3D" id="3.30.1440.10">
    <property type="match status" value="1"/>
</dbReference>
<dbReference type="HAMAP" id="MF_01333_B">
    <property type="entry name" value="Ribosomal_uL5_B"/>
    <property type="match status" value="1"/>
</dbReference>
<dbReference type="InterPro" id="IPR002132">
    <property type="entry name" value="Ribosomal_uL5"/>
</dbReference>
<dbReference type="InterPro" id="IPR020930">
    <property type="entry name" value="Ribosomal_uL5_bac-type"/>
</dbReference>
<dbReference type="InterPro" id="IPR031309">
    <property type="entry name" value="Ribosomal_uL5_C"/>
</dbReference>
<dbReference type="InterPro" id="IPR020929">
    <property type="entry name" value="Ribosomal_uL5_CS"/>
</dbReference>
<dbReference type="InterPro" id="IPR022803">
    <property type="entry name" value="Ribosomal_uL5_dom_sf"/>
</dbReference>
<dbReference type="InterPro" id="IPR031310">
    <property type="entry name" value="Ribosomal_uL5_N"/>
</dbReference>
<dbReference type="NCBIfam" id="NF000585">
    <property type="entry name" value="PRK00010.1"/>
    <property type="match status" value="1"/>
</dbReference>
<dbReference type="PANTHER" id="PTHR11994">
    <property type="entry name" value="60S RIBOSOMAL PROTEIN L11-RELATED"/>
    <property type="match status" value="1"/>
</dbReference>
<dbReference type="Pfam" id="PF00281">
    <property type="entry name" value="Ribosomal_L5"/>
    <property type="match status" value="1"/>
</dbReference>
<dbReference type="Pfam" id="PF00673">
    <property type="entry name" value="Ribosomal_L5_C"/>
    <property type="match status" value="1"/>
</dbReference>
<dbReference type="PIRSF" id="PIRSF002161">
    <property type="entry name" value="Ribosomal_L5"/>
    <property type="match status" value="1"/>
</dbReference>
<dbReference type="SUPFAM" id="SSF55282">
    <property type="entry name" value="RL5-like"/>
    <property type="match status" value="1"/>
</dbReference>
<dbReference type="PROSITE" id="PS00358">
    <property type="entry name" value="RIBOSOMAL_L5"/>
    <property type="match status" value="1"/>
</dbReference>
<evidence type="ECO:0000255" key="1">
    <source>
        <dbReference type="HAMAP-Rule" id="MF_01333"/>
    </source>
</evidence>
<evidence type="ECO:0000305" key="2"/>
<organism>
    <name type="scientific">Paraburkholderia xenovorans (strain LB400)</name>
    <dbReference type="NCBI Taxonomy" id="266265"/>
    <lineage>
        <taxon>Bacteria</taxon>
        <taxon>Pseudomonadati</taxon>
        <taxon>Pseudomonadota</taxon>
        <taxon>Betaproteobacteria</taxon>
        <taxon>Burkholderiales</taxon>
        <taxon>Burkholderiaceae</taxon>
        <taxon>Paraburkholderia</taxon>
    </lineage>
</organism>
<name>RL5_PARXL</name>
<keyword id="KW-1185">Reference proteome</keyword>
<keyword id="KW-0687">Ribonucleoprotein</keyword>
<keyword id="KW-0689">Ribosomal protein</keyword>
<keyword id="KW-0694">RNA-binding</keyword>
<keyword id="KW-0699">rRNA-binding</keyword>
<keyword id="KW-0820">tRNA-binding</keyword>
<proteinExistence type="inferred from homology"/>
<sequence>MARLQEFYKEKVVPGLIEKFGYKSVMEVPRITKITLNMGLGEAVADKKIIENAVGDLTKIAGQKPVITKARKAIAGFKIRQGYPIGAMVTLRGQAMYEFLDRFVTVALPRVRDFRGVSGRAFDGRGNYNIGVKEQIIFPEIDYDKIDALRGLNISITTTAKTDDEAKALLASFKFPFRN</sequence>
<accession>Q13TI2</accession>
<gene>
    <name evidence="1" type="primary">rplE</name>
    <name type="ordered locus">Bxeno_A4069</name>
    <name type="ORF">Bxe_A0326</name>
</gene>
<comment type="function">
    <text evidence="1">This is one of the proteins that bind and probably mediate the attachment of the 5S RNA into the large ribosomal subunit, where it forms part of the central protuberance. In the 70S ribosome it contacts protein S13 of the 30S subunit (bridge B1b), connecting the 2 subunits; this bridge is implicated in subunit movement. Contacts the P site tRNA; the 5S rRNA and some of its associated proteins might help stabilize positioning of ribosome-bound tRNAs.</text>
</comment>
<comment type="subunit">
    <text evidence="1">Part of the 50S ribosomal subunit; part of the 5S rRNA/L5/L18/L25 subcomplex. Contacts the 5S rRNA and the P site tRNA. Forms a bridge to the 30S subunit in the 70S ribosome.</text>
</comment>
<comment type="similarity">
    <text evidence="1">Belongs to the universal ribosomal protein uL5 family.</text>
</comment>
<feature type="chain" id="PRO_1000052710" description="Large ribosomal subunit protein uL5">
    <location>
        <begin position="1"/>
        <end position="179"/>
    </location>
</feature>
<protein>
    <recommendedName>
        <fullName evidence="1">Large ribosomal subunit protein uL5</fullName>
    </recommendedName>
    <alternativeName>
        <fullName evidence="2">50S ribosomal protein L5</fullName>
    </alternativeName>
</protein>
<reference key="1">
    <citation type="journal article" date="2006" name="Proc. Natl. Acad. Sci. U.S.A.">
        <title>Burkholderia xenovorans LB400 harbors a multi-replicon, 9.73-Mbp genome shaped for versatility.</title>
        <authorList>
            <person name="Chain P.S.G."/>
            <person name="Denef V.J."/>
            <person name="Konstantinidis K.T."/>
            <person name="Vergez L.M."/>
            <person name="Agullo L."/>
            <person name="Reyes V.L."/>
            <person name="Hauser L."/>
            <person name="Cordova M."/>
            <person name="Gomez L."/>
            <person name="Gonzalez M."/>
            <person name="Land M."/>
            <person name="Lao V."/>
            <person name="Larimer F."/>
            <person name="LiPuma J.J."/>
            <person name="Mahenthiralingam E."/>
            <person name="Malfatti S.A."/>
            <person name="Marx C.J."/>
            <person name="Parnell J.J."/>
            <person name="Ramette A."/>
            <person name="Richardson P."/>
            <person name="Seeger M."/>
            <person name="Smith D."/>
            <person name="Spilker T."/>
            <person name="Sul W.J."/>
            <person name="Tsoi T.V."/>
            <person name="Ulrich L.E."/>
            <person name="Zhulin I.B."/>
            <person name="Tiedje J.M."/>
        </authorList>
    </citation>
    <scope>NUCLEOTIDE SEQUENCE [LARGE SCALE GENOMIC DNA]</scope>
    <source>
        <strain>LB400</strain>
    </source>
</reference>